<protein>
    <recommendedName>
        <fullName evidence="6">GATA-type transcription factor sreA</fullName>
    </recommendedName>
    <alternativeName>
        <fullName evidence="6">Siderophore uptake regulator sreA</fullName>
    </alternativeName>
</protein>
<sequence length="542" mass="56626">MLTLRSSSDTVRGFPATKRDMIRQPSAEDLDAAHQLVSSARGVADLRPDSFDASRSPDGDKASVDTGAAMDDTASSDQNHSESQQQQQQQQQQHSQASEQVSAPESSSRSRASPKASRNTEVFLGHQCVPTNRIRDSGANANSGYANSSTSDPRASPAASDASAQNASGCGSTPAGTCPGGGSCNGTGGAVGCDGCPAYNNRVYKAAPRAPSARQARASPSAQTSEEQAQSGLDALDSASQDASGMPKACQNCGTTLTPLWRRDDQGNTICNACGLYYRLHGSHRPVAMKKTVIKRRKRVVPALRDRSPGAGSSDNSSVSPELHSASLATSNADTNAYPPSENGGPSYGAAQFPHSAPPPIDFTGYYSKPTQSTSSPGLNTLINHSPNTKKRTHSESTSAESAPPATRIQSDISASAHLPPINPASARALPNSGRLSSISSLLNHTDPSFTESHVDAALGSNAPARSQTQTQPQPGTRSYSPNPVNPPTTQPAHGSHSIPPPPLTPAADDKVKAARRAQLQREAENMREALRAKERELASLK</sequence>
<feature type="chain" id="PRO_0000444402" description="GATA-type transcription factor sreA">
    <location>
        <begin position="1"/>
        <end position="542"/>
    </location>
</feature>
<feature type="zinc finger region" description="GATA-type" evidence="3">
    <location>
        <begin position="250"/>
        <end position="274"/>
    </location>
</feature>
<feature type="region of interest" description="Disordered" evidence="4">
    <location>
        <begin position="1"/>
        <end position="172"/>
    </location>
</feature>
<feature type="region of interest" description="Cystein-rich region (CRR)" evidence="1">
    <location>
        <begin position="178"/>
        <end position="196"/>
    </location>
</feature>
<feature type="region of interest" description="Disordered" evidence="4">
    <location>
        <begin position="210"/>
        <end position="248"/>
    </location>
</feature>
<feature type="region of interest" description="Disordered" evidence="4">
    <location>
        <begin position="289"/>
        <end position="408"/>
    </location>
</feature>
<feature type="region of interest" description="Disordered" evidence="4">
    <location>
        <begin position="461"/>
        <end position="525"/>
    </location>
</feature>
<feature type="coiled-coil region" evidence="2">
    <location>
        <begin position="510"/>
        <end position="542"/>
    </location>
</feature>
<feature type="compositionally biased region" description="Polar residues" evidence="4">
    <location>
        <begin position="1"/>
        <end position="10"/>
    </location>
</feature>
<feature type="compositionally biased region" description="Basic and acidic residues" evidence="4">
    <location>
        <begin position="44"/>
        <end position="63"/>
    </location>
</feature>
<feature type="compositionally biased region" description="Low complexity" evidence="4">
    <location>
        <begin position="75"/>
        <end position="117"/>
    </location>
</feature>
<feature type="compositionally biased region" description="Low complexity" evidence="4">
    <location>
        <begin position="148"/>
        <end position="168"/>
    </location>
</feature>
<feature type="compositionally biased region" description="Low complexity" evidence="4">
    <location>
        <begin position="210"/>
        <end position="223"/>
    </location>
</feature>
<feature type="compositionally biased region" description="Basic residues" evidence="4">
    <location>
        <begin position="289"/>
        <end position="300"/>
    </location>
</feature>
<feature type="compositionally biased region" description="Polar residues" evidence="4">
    <location>
        <begin position="311"/>
        <end position="320"/>
    </location>
</feature>
<feature type="compositionally biased region" description="Polar residues" evidence="4">
    <location>
        <begin position="369"/>
        <end position="387"/>
    </location>
</feature>
<feature type="compositionally biased region" description="Low complexity" evidence="4">
    <location>
        <begin position="396"/>
        <end position="407"/>
    </location>
</feature>
<feature type="compositionally biased region" description="Polar residues" evidence="4">
    <location>
        <begin position="464"/>
        <end position="483"/>
    </location>
</feature>
<comment type="function">
    <text evidence="8">GATA-type transcription repressor that regulates iron acquisition genes through specific binding the GATA sequence elements of target promoters (PubMed:26960149). SreA targets include genes encoding a number of key iron-regulated factors such as the siderophore biosynthesis genes (PubMed:26960149). Is dispensable for growth on keratin substrates (PubMed:26960149). SreA represses the expression of hapX and the siderophore system during iron sufficient conditions by an iron-sensing mechanism, while hapX represses sreA and activates the siderophore system during iron-limiting conditions resulting in efficient iron uptake and inhibition of iron-consuming pathways (PubMed:26960149).</text>
</comment>
<comment type="subcellular location">
    <subcellularLocation>
        <location evidence="7">Nucleus</location>
    </subcellularLocation>
</comment>
<comment type="induction">
    <text evidence="5">Expression is repressed by the transcription factor hapX during iron starvation (PubMed:26960149).</text>
</comment>
<comment type="domain">
    <text evidence="1">The conserved cystein-rich region (CRR) localized between the zinc fingers is also involved in DNA-binding and transcription repressor activity (By similarity).</text>
</comment>
<dbReference type="EMBL" id="ABSU01000034">
    <property type="protein sequence ID" value="EFE29696.1"/>
    <property type="molecule type" value="Genomic_DNA"/>
</dbReference>
<dbReference type="RefSeq" id="XP_003010336.1">
    <property type="nucleotide sequence ID" value="XM_003010290.1"/>
</dbReference>
<dbReference type="SMR" id="D4B3J8"/>
<dbReference type="STRING" id="663331.D4B3J8"/>
<dbReference type="GeneID" id="9525606"/>
<dbReference type="KEGG" id="abe:ARB_03037"/>
<dbReference type="eggNOG" id="KOG1601">
    <property type="taxonomic scope" value="Eukaryota"/>
</dbReference>
<dbReference type="HOGENOM" id="CLU_021761_1_0_1"/>
<dbReference type="OMA" id="CYRPTTM"/>
<dbReference type="Proteomes" id="UP000008866">
    <property type="component" value="Unassembled WGS sequence"/>
</dbReference>
<dbReference type="GO" id="GO:0005634">
    <property type="term" value="C:nucleus"/>
    <property type="evidence" value="ECO:0007669"/>
    <property type="project" value="UniProtKB-SubCell"/>
</dbReference>
<dbReference type="GO" id="GO:0000981">
    <property type="term" value="F:DNA-binding transcription factor activity, RNA polymerase II-specific"/>
    <property type="evidence" value="ECO:0007669"/>
    <property type="project" value="TreeGrafter"/>
</dbReference>
<dbReference type="GO" id="GO:0000978">
    <property type="term" value="F:RNA polymerase II cis-regulatory region sequence-specific DNA binding"/>
    <property type="evidence" value="ECO:0007669"/>
    <property type="project" value="TreeGrafter"/>
</dbReference>
<dbReference type="GO" id="GO:0008270">
    <property type="term" value="F:zinc ion binding"/>
    <property type="evidence" value="ECO:0007669"/>
    <property type="project" value="UniProtKB-KW"/>
</dbReference>
<dbReference type="GO" id="GO:0000122">
    <property type="term" value="P:negative regulation of transcription by RNA polymerase II"/>
    <property type="evidence" value="ECO:0007669"/>
    <property type="project" value="TreeGrafter"/>
</dbReference>
<dbReference type="GO" id="GO:0045944">
    <property type="term" value="P:positive regulation of transcription by RNA polymerase II"/>
    <property type="evidence" value="ECO:0007669"/>
    <property type="project" value="TreeGrafter"/>
</dbReference>
<dbReference type="CDD" id="cd00202">
    <property type="entry name" value="ZnF_GATA"/>
    <property type="match status" value="1"/>
</dbReference>
<dbReference type="FunFam" id="3.30.50.10:FF:000007">
    <property type="entry name" value="Nitrogen regulatory AreA, N-terminal"/>
    <property type="match status" value="1"/>
</dbReference>
<dbReference type="Gene3D" id="3.30.50.10">
    <property type="entry name" value="Erythroid Transcription Factor GATA-1, subunit A"/>
    <property type="match status" value="1"/>
</dbReference>
<dbReference type="InterPro" id="IPR039355">
    <property type="entry name" value="Transcription_factor_GATA"/>
</dbReference>
<dbReference type="InterPro" id="IPR000679">
    <property type="entry name" value="Znf_GATA"/>
</dbReference>
<dbReference type="InterPro" id="IPR013088">
    <property type="entry name" value="Znf_NHR/GATA"/>
</dbReference>
<dbReference type="PANTHER" id="PTHR10071:SF335">
    <property type="entry name" value="IRON-SENSING TRANSCRIPTIONAL REPRESSOR-RELATED"/>
    <property type="match status" value="1"/>
</dbReference>
<dbReference type="PANTHER" id="PTHR10071">
    <property type="entry name" value="TRANSCRIPTION FACTOR GATA FAMILY MEMBER"/>
    <property type="match status" value="1"/>
</dbReference>
<dbReference type="Pfam" id="PF00320">
    <property type="entry name" value="GATA"/>
    <property type="match status" value="1"/>
</dbReference>
<dbReference type="PRINTS" id="PR00619">
    <property type="entry name" value="GATAZNFINGER"/>
</dbReference>
<dbReference type="SMART" id="SM00401">
    <property type="entry name" value="ZnF_GATA"/>
    <property type="match status" value="1"/>
</dbReference>
<dbReference type="SUPFAM" id="SSF57716">
    <property type="entry name" value="Glucocorticoid receptor-like (DNA-binding domain)"/>
    <property type="match status" value="1"/>
</dbReference>
<dbReference type="PROSITE" id="PS00344">
    <property type="entry name" value="GATA_ZN_FINGER_1"/>
    <property type="match status" value="1"/>
</dbReference>
<dbReference type="PROSITE" id="PS50114">
    <property type="entry name" value="GATA_ZN_FINGER_2"/>
    <property type="match status" value="1"/>
</dbReference>
<proteinExistence type="evidence at transcript level"/>
<gene>
    <name evidence="6" type="primary">sreA</name>
    <name type="ORF">ARB_03037</name>
</gene>
<keyword id="KW-0175">Coiled coil</keyword>
<keyword id="KW-0479">Metal-binding</keyword>
<keyword id="KW-0539">Nucleus</keyword>
<keyword id="KW-1185">Reference proteome</keyword>
<keyword id="KW-0804">Transcription</keyword>
<keyword id="KW-0805">Transcription regulation</keyword>
<keyword id="KW-0862">Zinc</keyword>
<keyword id="KW-0863">Zinc-finger</keyword>
<organism>
    <name type="scientific">Arthroderma benhamiae (strain ATCC MYA-4681 / CBS 112371)</name>
    <name type="common">Trichophyton mentagrophytes</name>
    <dbReference type="NCBI Taxonomy" id="663331"/>
    <lineage>
        <taxon>Eukaryota</taxon>
        <taxon>Fungi</taxon>
        <taxon>Dikarya</taxon>
        <taxon>Ascomycota</taxon>
        <taxon>Pezizomycotina</taxon>
        <taxon>Eurotiomycetes</taxon>
        <taxon>Eurotiomycetidae</taxon>
        <taxon>Onygenales</taxon>
        <taxon>Arthrodermataceae</taxon>
        <taxon>Trichophyton</taxon>
    </lineage>
</organism>
<name>SREA_ARTBC</name>
<evidence type="ECO:0000250" key="1">
    <source>
        <dbReference type="UniProtKB" id="Q1K8E7"/>
    </source>
</evidence>
<evidence type="ECO:0000255" key="2"/>
<evidence type="ECO:0000255" key="3">
    <source>
        <dbReference type="PROSITE-ProRule" id="PRU00094"/>
    </source>
</evidence>
<evidence type="ECO:0000256" key="4">
    <source>
        <dbReference type="SAM" id="MobiDB-lite"/>
    </source>
</evidence>
<evidence type="ECO:0000269" key="5">
    <source>
    </source>
</evidence>
<evidence type="ECO:0000303" key="6">
    <source>
    </source>
</evidence>
<evidence type="ECO:0000305" key="7"/>
<evidence type="ECO:0000305" key="8">
    <source>
    </source>
</evidence>
<reference key="1">
    <citation type="journal article" date="2011" name="Genome Biol.">
        <title>Comparative and functional genomics provide insights into the pathogenicity of dermatophytic fungi.</title>
        <authorList>
            <person name="Burmester A."/>
            <person name="Shelest E."/>
            <person name="Gloeckner G."/>
            <person name="Heddergott C."/>
            <person name="Schindler S."/>
            <person name="Staib P."/>
            <person name="Heidel A."/>
            <person name="Felder M."/>
            <person name="Petzold A."/>
            <person name="Szafranski K."/>
            <person name="Feuermann M."/>
            <person name="Pedruzzi I."/>
            <person name="Priebe S."/>
            <person name="Groth M."/>
            <person name="Winkler R."/>
            <person name="Li W."/>
            <person name="Kniemeyer O."/>
            <person name="Schroeckh V."/>
            <person name="Hertweck C."/>
            <person name="Hube B."/>
            <person name="White T.C."/>
            <person name="Platzer M."/>
            <person name="Guthke R."/>
            <person name="Heitman J."/>
            <person name="Woestemeyer J."/>
            <person name="Zipfel P.F."/>
            <person name="Monod M."/>
            <person name="Brakhage A.A."/>
        </authorList>
    </citation>
    <scope>NUCLEOTIDE SEQUENCE [LARGE SCALE GENOMIC DNA]</scope>
    <source>
        <strain>ATCC MYA-4681 / CBS 112371</strain>
    </source>
</reference>
<reference key="2">
    <citation type="journal article" date="2016" name="PLoS ONE">
        <title>HapX mediates iron homeostasis in the pathogenic dermatophyte Arthroderma benhamiae but is dispensable for virulence.</title>
        <authorList>
            <person name="Kroeber A."/>
            <person name="Scherlach K."/>
            <person name="Hortschansky P."/>
            <person name="Shelest E."/>
            <person name="Staib P."/>
            <person name="Kniemeyer O."/>
            <person name="Brakhage A.A."/>
        </authorList>
    </citation>
    <scope>FUNCTION</scope>
    <scope>INDUCTION</scope>
</reference>
<accession>D4B3J8</accession>